<evidence type="ECO:0000255" key="1">
    <source>
        <dbReference type="HAMAP-Rule" id="MF_00004"/>
    </source>
</evidence>
<reference key="1">
    <citation type="submission" date="2008-04" db="EMBL/GenBank/DDBJ databases">
        <title>Complete sequence of chromosome 1 of Burkholderia ambifaria MC40-6.</title>
        <authorList>
            <person name="Copeland A."/>
            <person name="Lucas S."/>
            <person name="Lapidus A."/>
            <person name="Glavina del Rio T."/>
            <person name="Dalin E."/>
            <person name="Tice H."/>
            <person name="Pitluck S."/>
            <person name="Chain P."/>
            <person name="Malfatti S."/>
            <person name="Shin M."/>
            <person name="Vergez L."/>
            <person name="Lang D."/>
            <person name="Schmutz J."/>
            <person name="Larimer F."/>
            <person name="Land M."/>
            <person name="Hauser L."/>
            <person name="Kyrpides N."/>
            <person name="Lykidis A."/>
            <person name="Ramette A."/>
            <person name="Konstantinidis K."/>
            <person name="Tiedje J."/>
            <person name="Richardson P."/>
        </authorList>
    </citation>
    <scope>NUCLEOTIDE SEQUENCE [LARGE SCALE GENOMIC DNA]</scope>
    <source>
        <strain>MC40-6</strain>
    </source>
</reference>
<proteinExistence type="inferred from homology"/>
<feature type="chain" id="PRO_1000088956" description="Adenine phosphoribosyltransferase">
    <location>
        <begin position="1"/>
        <end position="188"/>
    </location>
</feature>
<name>APT_BURA4</name>
<keyword id="KW-0963">Cytoplasm</keyword>
<keyword id="KW-0328">Glycosyltransferase</keyword>
<keyword id="KW-0660">Purine salvage</keyword>
<keyword id="KW-0808">Transferase</keyword>
<gene>
    <name evidence="1" type="primary">apt</name>
    <name type="ordered locus">BamMC406_2702</name>
</gene>
<comment type="function">
    <text evidence="1">Catalyzes a salvage reaction resulting in the formation of AMP, that is energically less costly than de novo synthesis.</text>
</comment>
<comment type="catalytic activity">
    <reaction evidence="1">
        <text>AMP + diphosphate = 5-phospho-alpha-D-ribose 1-diphosphate + adenine</text>
        <dbReference type="Rhea" id="RHEA:16609"/>
        <dbReference type="ChEBI" id="CHEBI:16708"/>
        <dbReference type="ChEBI" id="CHEBI:33019"/>
        <dbReference type="ChEBI" id="CHEBI:58017"/>
        <dbReference type="ChEBI" id="CHEBI:456215"/>
        <dbReference type="EC" id="2.4.2.7"/>
    </reaction>
</comment>
<comment type="pathway">
    <text evidence="1">Purine metabolism; AMP biosynthesis via salvage pathway; AMP from adenine: step 1/1.</text>
</comment>
<comment type="subunit">
    <text evidence="1">Homodimer.</text>
</comment>
<comment type="subcellular location">
    <subcellularLocation>
        <location evidence="1">Cytoplasm</location>
    </subcellularLocation>
</comment>
<comment type="similarity">
    <text evidence="1">Belongs to the purine/pyrimidine phosphoribosyltransferase family.</text>
</comment>
<organism>
    <name type="scientific">Burkholderia ambifaria (strain MC40-6)</name>
    <dbReference type="NCBI Taxonomy" id="398577"/>
    <lineage>
        <taxon>Bacteria</taxon>
        <taxon>Pseudomonadati</taxon>
        <taxon>Pseudomonadota</taxon>
        <taxon>Betaproteobacteria</taxon>
        <taxon>Burkholderiales</taxon>
        <taxon>Burkholderiaceae</taxon>
        <taxon>Burkholderia</taxon>
        <taxon>Burkholderia cepacia complex</taxon>
    </lineage>
</organism>
<sequence>MPHSSPGAPLDPVAFIHSQIRTVPDWPQPGVQFRDITTLLQSPKALRILVDLFVERYVDAKLDYVAGLDARGFIIAPIVAYELSVGFVPIRKVGKLPYKTRSESYDLEYGSATVEIHEDACRPGDRVIIMDDLIATGGTMMAGRNLLQRLGAVVVEGAAIIDLPDLGGSTLLRNAGLPVYTVTEFAGH</sequence>
<accession>B1YN34</accession>
<dbReference type="EC" id="2.4.2.7" evidence="1"/>
<dbReference type="EMBL" id="CP001025">
    <property type="protein sequence ID" value="ACB65179.1"/>
    <property type="molecule type" value="Genomic_DNA"/>
</dbReference>
<dbReference type="RefSeq" id="WP_011657958.1">
    <property type="nucleotide sequence ID" value="NC_010551.1"/>
</dbReference>
<dbReference type="SMR" id="B1YN34"/>
<dbReference type="KEGG" id="bac:BamMC406_2702"/>
<dbReference type="HOGENOM" id="CLU_063339_3_0_4"/>
<dbReference type="OrthoDB" id="9803963at2"/>
<dbReference type="UniPathway" id="UPA00588">
    <property type="reaction ID" value="UER00646"/>
</dbReference>
<dbReference type="Proteomes" id="UP000001680">
    <property type="component" value="Chromosome 1"/>
</dbReference>
<dbReference type="GO" id="GO:0005829">
    <property type="term" value="C:cytosol"/>
    <property type="evidence" value="ECO:0007669"/>
    <property type="project" value="TreeGrafter"/>
</dbReference>
<dbReference type="GO" id="GO:0003999">
    <property type="term" value="F:adenine phosphoribosyltransferase activity"/>
    <property type="evidence" value="ECO:0007669"/>
    <property type="project" value="UniProtKB-UniRule"/>
</dbReference>
<dbReference type="GO" id="GO:0006168">
    <property type="term" value="P:adenine salvage"/>
    <property type="evidence" value="ECO:0007669"/>
    <property type="project" value="InterPro"/>
</dbReference>
<dbReference type="GO" id="GO:0044209">
    <property type="term" value="P:AMP salvage"/>
    <property type="evidence" value="ECO:0007669"/>
    <property type="project" value="UniProtKB-UniRule"/>
</dbReference>
<dbReference type="GO" id="GO:0006166">
    <property type="term" value="P:purine ribonucleoside salvage"/>
    <property type="evidence" value="ECO:0007669"/>
    <property type="project" value="UniProtKB-KW"/>
</dbReference>
<dbReference type="CDD" id="cd06223">
    <property type="entry name" value="PRTases_typeI"/>
    <property type="match status" value="1"/>
</dbReference>
<dbReference type="FunFam" id="3.40.50.2020:FF:000021">
    <property type="entry name" value="Adenine phosphoribosyltransferase"/>
    <property type="match status" value="1"/>
</dbReference>
<dbReference type="Gene3D" id="3.40.50.2020">
    <property type="match status" value="1"/>
</dbReference>
<dbReference type="HAMAP" id="MF_00004">
    <property type="entry name" value="Aden_phosphoribosyltr"/>
    <property type="match status" value="1"/>
</dbReference>
<dbReference type="InterPro" id="IPR005764">
    <property type="entry name" value="Ade_phspho_trans"/>
</dbReference>
<dbReference type="InterPro" id="IPR050120">
    <property type="entry name" value="Adenine_PRTase"/>
</dbReference>
<dbReference type="InterPro" id="IPR000836">
    <property type="entry name" value="PRibTrfase_dom"/>
</dbReference>
<dbReference type="InterPro" id="IPR029057">
    <property type="entry name" value="PRTase-like"/>
</dbReference>
<dbReference type="NCBIfam" id="TIGR01090">
    <property type="entry name" value="apt"/>
    <property type="match status" value="1"/>
</dbReference>
<dbReference type="NCBIfam" id="NF002634">
    <property type="entry name" value="PRK02304.1-3"/>
    <property type="match status" value="1"/>
</dbReference>
<dbReference type="NCBIfam" id="NF002636">
    <property type="entry name" value="PRK02304.1-5"/>
    <property type="match status" value="1"/>
</dbReference>
<dbReference type="PANTHER" id="PTHR11776">
    <property type="entry name" value="ADENINE PHOSPHORIBOSYLTRANSFERASE"/>
    <property type="match status" value="1"/>
</dbReference>
<dbReference type="PANTHER" id="PTHR11776:SF7">
    <property type="entry name" value="PHOSPHORIBOSYLTRANSFERASE DOMAIN-CONTAINING PROTEIN"/>
    <property type="match status" value="1"/>
</dbReference>
<dbReference type="Pfam" id="PF00156">
    <property type="entry name" value="Pribosyltran"/>
    <property type="match status" value="1"/>
</dbReference>
<dbReference type="SUPFAM" id="SSF53271">
    <property type="entry name" value="PRTase-like"/>
    <property type="match status" value="1"/>
</dbReference>
<dbReference type="PROSITE" id="PS00103">
    <property type="entry name" value="PUR_PYR_PR_TRANSFER"/>
    <property type="match status" value="1"/>
</dbReference>
<protein>
    <recommendedName>
        <fullName evidence="1">Adenine phosphoribosyltransferase</fullName>
        <shortName evidence="1">APRT</shortName>
        <ecNumber evidence="1">2.4.2.7</ecNumber>
    </recommendedName>
</protein>